<keyword id="KW-0408">Iron</keyword>
<keyword id="KW-0479">Metal-binding</keyword>
<keyword id="KW-0503">Monooxygenase</keyword>
<keyword id="KW-0560">Oxidoreductase</keyword>
<keyword id="KW-0597">Phosphoprotein</keyword>
<keyword id="KW-1185">Reference proteome</keyword>
<keyword id="KW-0724">Serotonin biosynthesis</keyword>
<keyword id="KW-0832">Ubl conjugation</keyword>
<feature type="chain" id="PRO_0000205569" description="Tryptophan 5-hydroxylase 1">
    <location>
        <begin position="1"/>
        <end position="447"/>
    </location>
</feature>
<feature type="domain" description="ACT" evidence="5">
    <location>
        <begin position="22"/>
        <end position="97"/>
    </location>
</feature>
<feature type="binding site" evidence="3">
    <location>
        <position position="238"/>
    </location>
    <ligand>
        <name>L-tryptophan</name>
        <dbReference type="ChEBI" id="CHEBI:57912"/>
    </ligand>
</feature>
<feature type="binding site" evidence="3">
    <location>
        <position position="260"/>
    </location>
    <ligand>
        <name>L-tryptophan</name>
        <dbReference type="ChEBI" id="CHEBI:57912"/>
    </ligand>
</feature>
<feature type="binding site" evidence="3">
    <location>
        <position position="268"/>
    </location>
    <ligand>
        <name>L-tryptophan</name>
        <dbReference type="ChEBI" id="CHEBI:57912"/>
    </ligand>
</feature>
<feature type="binding site" evidence="3">
    <location>
        <position position="275"/>
    </location>
    <ligand>
        <name>Fe cation</name>
        <dbReference type="ChEBI" id="CHEBI:24875"/>
    </ligand>
</feature>
<feature type="binding site" evidence="3">
    <location>
        <position position="280"/>
    </location>
    <ligand>
        <name>Fe cation</name>
        <dbReference type="ChEBI" id="CHEBI:24875"/>
    </ligand>
</feature>
<feature type="binding site" evidence="3">
    <location>
        <position position="320"/>
    </location>
    <ligand>
        <name>Fe cation</name>
        <dbReference type="ChEBI" id="CHEBI:24875"/>
    </ligand>
</feature>
<feature type="binding site" evidence="3">
    <location>
        <position position="339"/>
    </location>
    <ligand>
        <name>L-tryptophan</name>
        <dbReference type="ChEBI" id="CHEBI:57912"/>
    </ligand>
</feature>
<feature type="binding site" evidence="3">
    <location>
        <position position="369"/>
    </location>
    <ligand>
        <name>L-tryptophan</name>
        <dbReference type="ChEBI" id="CHEBI:57912"/>
    </ligand>
</feature>
<feature type="modified residue" description="Phosphoserine; by PKA" evidence="4">
    <location>
        <position position="61"/>
    </location>
</feature>
<organism>
    <name type="scientific">Mus musculus</name>
    <name type="common">Mouse</name>
    <dbReference type="NCBI Taxonomy" id="10090"/>
    <lineage>
        <taxon>Eukaryota</taxon>
        <taxon>Metazoa</taxon>
        <taxon>Chordata</taxon>
        <taxon>Craniata</taxon>
        <taxon>Vertebrata</taxon>
        <taxon>Euteleostomi</taxon>
        <taxon>Mammalia</taxon>
        <taxon>Eutheria</taxon>
        <taxon>Euarchontoglires</taxon>
        <taxon>Glires</taxon>
        <taxon>Rodentia</taxon>
        <taxon>Myomorpha</taxon>
        <taxon>Muroidea</taxon>
        <taxon>Muridae</taxon>
        <taxon>Murinae</taxon>
        <taxon>Mus</taxon>
        <taxon>Mus</taxon>
    </lineage>
</organism>
<protein>
    <recommendedName>
        <fullName evidence="9">Tryptophan 5-hydroxylase 1</fullName>
        <ecNumber evidence="10">1.14.16.4</ecNumber>
    </recommendedName>
    <alternativeName>
        <fullName>Tryptophan 5-monooxygenase 1</fullName>
    </alternativeName>
</protein>
<sequence>MIEDNKENKENKDHSSERGRVTLIFSLENEVGGLIKVLKIFQENHVSLLHIESRKSKQRNSEFEIFVDCDISREQLNDIFPLLKSHATVLSVDSPDQLTAKEDVMETVPWFPKKISDLDFCANRVLLYGSELDADHPGFKDNVYRRRRKYFAELAMNYKHGDPIPKIEFTEEEIKTWGTIFRELNKLYPTHACREYLRNLPLLSKYCGYREDNIPQLEDVSNFLKERTGFSIRPVAGYLSPRDFLSGLAFRVFHCTQYVRHSSDPLYTPEPDTCHELLGHVPLLAEPSFAQFSQEIGLASLGASEETVQKLATCYFFTVEFGLCKQDGQLRVFGAGLLSSISELKHALSGHAKVKPFDPKIACKQECLITSFQDVYFVSESFEDAKEKMREFAKTVKRPFGLKYNPYTQSVQVLRDTKSITSAMNELRYDLDVISDALARVTRWPSV</sequence>
<comment type="function">
    <text evidence="6 10">Oxidizes L-tryptophan to 5-hydroxy-l-tryptophan in the rate-determining step of serotonin biosynthesis.</text>
</comment>
<comment type="catalytic activity">
    <reaction evidence="10">
        <text>(6R)-L-erythro-5,6,7,8-tetrahydrobiopterin + L-tryptophan + O2 = 5-hydroxy-L-tryptophan + (4aS,6R)-4a-hydroxy-L-erythro-5,6,7,8-tetrahydrobiopterin</text>
        <dbReference type="Rhea" id="RHEA:16709"/>
        <dbReference type="ChEBI" id="CHEBI:15379"/>
        <dbReference type="ChEBI" id="CHEBI:15642"/>
        <dbReference type="ChEBI" id="CHEBI:57912"/>
        <dbReference type="ChEBI" id="CHEBI:58266"/>
        <dbReference type="ChEBI" id="CHEBI:59560"/>
        <dbReference type="EC" id="1.14.16.4"/>
    </reaction>
</comment>
<comment type="cofactor">
    <cofactor evidence="2">
        <name>Fe(2+)</name>
        <dbReference type="ChEBI" id="CHEBI:29033"/>
    </cofactor>
</comment>
<comment type="pathway">
    <text evidence="10">Aromatic compound metabolism; serotonin biosynthesis; serotonin from L-tryptophan: step 1/2.</text>
</comment>
<comment type="subunit">
    <text evidence="3 7">Homotetramer (By similarity). Interacts with DNAJC12 (PubMed:39695187).</text>
</comment>
<comment type="PTM">
    <text evidence="1">Ubiquitinated, leading to its degradation by the proteasome. Ubiquitinated is triggered by phosphorylation.</text>
</comment>
<comment type="PTM">
    <text evidence="1">Phosphorylated; triggering degradation by the proteasome.</text>
</comment>
<comment type="disruption phenotype">
    <text evidence="6">Mice display impaired hemostasis, resulting in a reduced risk of thrombosis and thromboembolism, although the ultrastructure of the platelets is not affected (PubMed:14697203). Blood platelet counts are normal (PubMed:14697203). Defects are caused by inability to inability to mediate protein serotonylation of small GTPases during activation and aggregation of platelets (PubMed:14697203).</text>
</comment>
<comment type="similarity">
    <text evidence="9">Belongs to the biopterin-dependent aromatic amino acid hydroxylase family.</text>
</comment>
<proteinExistence type="evidence at protein level"/>
<gene>
    <name evidence="8 11" type="primary">Tph1</name>
    <name type="synonym">Tph</name>
</gene>
<dbReference type="EC" id="1.14.16.4" evidence="10"/>
<dbReference type="EMBL" id="J04758">
    <property type="protein sequence ID" value="AAA63401.1"/>
    <property type="molecule type" value="mRNA"/>
</dbReference>
<dbReference type="EMBL" id="BC072582">
    <property type="protein sequence ID" value="AAH72582.1"/>
    <property type="molecule type" value="mRNA"/>
</dbReference>
<dbReference type="CCDS" id="CCDS21280.1"/>
<dbReference type="PIR" id="A34582">
    <property type="entry name" value="A34582"/>
</dbReference>
<dbReference type="RefSeq" id="NP_001129556.1">
    <property type="nucleotide sequence ID" value="NM_001136084.2"/>
</dbReference>
<dbReference type="RefSeq" id="NP_033440.1">
    <property type="nucleotide sequence ID" value="NM_009414.3"/>
</dbReference>
<dbReference type="RefSeq" id="XP_036008805.1">
    <property type="nucleotide sequence ID" value="XM_036152912.1"/>
</dbReference>
<dbReference type="SMR" id="P17532"/>
<dbReference type="FunCoup" id="P17532">
    <property type="interactions" value="134"/>
</dbReference>
<dbReference type="STRING" id="10090.ENSMUSP00000037752"/>
<dbReference type="ChEMBL" id="CHEMBL5465551"/>
<dbReference type="iPTMnet" id="P17532"/>
<dbReference type="PhosphoSitePlus" id="P17532"/>
<dbReference type="PaxDb" id="10090-ENSMUSP00000037752"/>
<dbReference type="ProteomicsDB" id="259165"/>
<dbReference type="Antibodypedia" id="4386">
    <property type="antibodies" value="622 antibodies from 42 providers"/>
</dbReference>
<dbReference type="DNASU" id="21990"/>
<dbReference type="Ensembl" id="ENSMUST00000049298.15">
    <property type="protein sequence ID" value="ENSMUSP00000037752.8"/>
    <property type="gene ID" value="ENSMUSG00000040046.15"/>
</dbReference>
<dbReference type="Ensembl" id="ENSMUST00000107669.9">
    <property type="protein sequence ID" value="ENSMUSP00000103296.3"/>
    <property type="gene ID" value="ENSMUSG00000040046.15"/>
</dbReference>
<dbReference type="GeneID" id="21990"/>
<dbReference type="KEGG" id="mmu:21990"/>
<dbReference type="UCSC" id="uc009gyq.3">
    <property type="organism name" value="mouse"/>
</dbReference>
<dbReference type="AGR" id="MGI:98796"/>
<dbReference type="CTD" id="7166"/>
<dbReference type="MGI" id="MGI:98796">
    <property type="gene designation" value="Tph1"/>
</dbReference>
<dbReference type="VEuPathDB" id="HostDB:ENSMUSG00000040046"/>
<dbReference type="eggNOG" id="KOG3820">
    <property type="taxonomic scope" value="Eukaryota"/>
</dbReference>
<dbReference type="GeneTree" id="ENSGT00950000182885"/>
<dbReference type="HOGENOM" id="CLU_023198_0_1_1"/>
<dbReference type="InParanoid" id="P17532"/>
<dbReference type="OMA" id="DMPWFPR"/>
<dbReference type="OrthoDB" id="983542at2759"/>
<dbReference type="PhylomeDB" id="P17532"/>
<dbReference type="TreeFam" id="TF313327"/>
<dbReference type="BRENDA" id="1.14.16.4">
    <property type="organism ID" value="3474"/>
</dbReference>
<dbReference type="Reactome" id="R-MMU-209931">
    <property type="pathway name" value="Serotonin and melatonin biosynthesis"/>
</dbReference>
<dbReference type="UniPathway" id="UPA00846">
    <property type="reaction ID" value="UER00799"/>
</dbReference>
<dbReference type="BioGRID-ORCS" id="21990">
    <property type="hits" value="2 hits in 79 CRISPR screens"/>
</dbReference>
<dbReference type="PRO" id="PR:P17532"/>
<dbReference type="Proteomes" id="UP000000589">
    <property type="component" value="Chromosome 7"/>
</dbReference>
<dbReference type="RNAct" id="P17532">
    <property type="molecule type" value="protein"/>
</dbReference>
<dbReference type="Bgee" id="ENSMUSG00000040046">
    <property type="expression patterns" value="Expressed in pineal body and 69 other cell types or tissues"/>
</dbReference>
<dbReference type="ExpressionAtlas" id="P17532">
    <property type="expression patterns" value="baseline and differential"/>
</dbReference>
<dbReference type="GO" id="GO:0005737">
    <property type="term" value="C:cytoplasm"/>
    <property type="evidence" value="ECO:0000314"/>
    <property type="project" value="MGI"/>
</dbReference>
<dbReference type="GO" id="GO:0005506">
    <property type="term" value="F:iron ion binding"/>
    <property type="evidence" value="ECO:0007669"/>
    <property type="project" value="InterPro"/>
</dbReference>
<dbReference type="GO" id="GO:0004510">
    <property type="term" value="F:tryptophan 5-monooxygenase activity"/>
    <property type="evidence" value="ECO:0000314"/>
    <property type="project" value="MGI"/>
</dbReference>
<dbReference type="GO" id="GO:0009072">
    <property type="term" value="P:aromatic amino acid metabolic process"/>
    <property type="evidence" value="ECO:0007669"/>
    <property type="project" value="InterPro"/>
</dbReference>
<dbReference type="GO" id="GO:0046849">
    <property type="term" value="P:bone remodeling"/>
    <property type="evidence" value="ECO:0000316"/>
    <property type="project" value="MGI"/>
</dbReference>
<dbReference type="GO" id="GO:0060749">
    <property type="term" value="P:mammary gland alveolus development"/>
    <property type="evidence" value="ECO:0000315"/>
    <property type="project" value="MGI"/>
</dbReference>
<dbReference type="GO" id="GO:0002576">
    <property type="term" value="P:platelet degranulation"/>
    <property type="evidence" value="ECO:0000315"/>
    <property type="project" value="UniProtKB"/>
</dbReference>
<dbReference type="GO" id="GO:0045600">
    <property type="term" value="P:positive regulation of fat cell differentiation"/>
    <property type="evidence" value="ECO:0000315"/>
    <property type="project" value="MGI"/>
</dbReference>
<dbReference type="GO" id="GO:1900046">
    <property type="term" value="P:regulation of hemostasis"/>
    <property type="evidence" value="ECO:0000315"/>
    <property type="project" value="UniProtKB"/>
</dbReference>
<dbReference type="GO" id="GO:0042427">
    <property type="term" value="P:serotonin biosynthetic process"/>
    <property type="evidence" value="ECO:0000315"/>
    <property type="project" value="UniProtKB"/>
</dbReference>
<dbReference type="CDD" id="cd03346">
    <property type="entry name" value="eu_TrpOH"/>
    <property type="match status" value="1"/>
</dbReference>
<dbReference type="FunFam" id="1.10.800.10:FF:000001">
    <property type="entry name" value="tryptophan 5-hydroxylase 1"/>
    <property type="match status" value="1"/>
</dbReference>
<dbReference type="Gene3D" id="1.10.800.10">
    <property type="entry name" value="Aromatic amino acid hydroxylase"/>
    <property type="match status" value="1"/>
</dbReference>
<dbReference type="InterPro" id="IPR045865">
    <property type="entry name" value="ACT-like_dom_sf"/>
</dbReference>
<dbReference type="InterPro" id="IPR002912">
    <property type="entry name" value="ACT_dom"/>
</dbReference>
<dbReference type="InterPro" id="IPR001273">
    <property type="entry name" value="ArAA_hydroxylase"/>
</dbReference>
<dbReference type="InterPro" id="IPR018301">
    <property type="entry name" value="ArAA_hydroxylase_Fe/CU_BS"/>
</dbReference>
<dbReference type="InterPro" id="IPR036951">
    <property type="entry name" value="ArAA_hydroxylase_sf"/>
</dbReference>
<dbReference type="InterPro" id="IPR036329">
    <property type="entry name" value="Aro-AA_hydroxylase_C_sf"/>
</dbReference>
<dbReference type="InterPro" id="IPR019774">
    <property type="entry name" value="Aromatic-AA_hydroxylase_C"/>
</dbReference>
<dbReference type="InterPro" id="IPR005963">
    <property type="entry name" value="Trp_5_mOase"/>
</dbReference>
<dbReference type="InterPro" id="IPR041904">
    <property type="entry name" value="TrpOH_cat"/>
</dbReference>
<dbReference type="InterPro" id="IPR019773">
    <property type="entry name" value="Tyrosine_3-monooxygenase-like"/>
</dbReference>
<dbReference type="NCBIfam" id="TIGR01270">
    <property type="entry name" value="Trp_5_monoox"/>
    <property type="match status" value="1"/>
</dbReference>
<dbReference type="PANTHER" id="PTHR11473">
    <property type="entry name" value="AROMATIC AMINO ACID HYDROXYLASE"/>
    <property type="match status" value="1"/>
</dbReference>
<dbReference type="PANTHER" id="PTHR11473:SF23">
    <property type="entry name" value="TRYPTOPHAN 5-HYDROXYLASE 1"/>
    <property type="match status" value="1"/>
</dbReference>
<dbReference type="Pfam" id="PF01842">
    <property type="entry name" value="ACT"/>
    <property type="match status" value="1"/>
</dbReference>
<dbReference type="Pfam" id="PF00351">
    <property type="entry name" value="Biopterin_H"/>
    <property type="match status" value="1"/>
</dbReference>
<dbReference type="PIRSF" id="PIRSF000336">
    <property type="entry name" value="TH"/>
    <property type="match status" value="1"/>
</dbReference>
<dbReference type="PRINTS" id="PR00372">
    <property type="entry name" value="FYWHYDRXLASE"/>
</dbReference>
<dbReference type="SUPFAM" id="SSF55021">
    <property type="entry name" value="ACT-like"/>
    <property type="match status" value="1"/>
</dbReference>
<dbReference type="SUPFAM" id="SSF56534">
    <property type="entry name" value="Aromatic aminoacid monoxygenases, catalytic and oligomerization domains"/>
    <property type="match status" value="1"/>
</dbReference>
<dbReference type="PROSITE" id="PS51671">
    <property type="entry name" value="ACT"/>
    <property type="match status" value="1"/>
</dbReference>
<dbReference type="PROSITE" id="PS00367">
    <property type="entry name" value="BH4_AAA_HYDROXYL_1"/>
    <property type="match status" value="1"/>
</dbReference>
<dbReference type="PROSITE" id="PS51410">
    <property type="entry name" value="BH4_AAA_HYDROXYL_2"/>
    <property type="match status" value="1"/>
</dbReference>
<name>TPH1_MOUSE</name>
<evidence type="ECO:0000250" key="1">
    <source>
        <dbReference type="UniProtKB" id="P09810"/>
    </source>
</evidence>
<evidence type="ECO:0000250" key="2">
    <source>
        <dbReference type="UniProtKB" id="P17752"/>
    </source>
</evidence>
<evidence type="ECO:0000250" key="3">
    <source>
        <dbReference type="UniProtKB" id="P70080"/>
    </source>
</evidence>
<evidence type="ECO:0000255" key="4"/>
<evidence type="ECO:0000255" key="5">
    <source>
        <dbReference type="PROSITE-ProRule" id="PRU01007"/>
    </source>
</evidence>
<evidence type="ECO:0000269" key="6">
    <source>
    </source>
</evidence>
<evidence type="ECO:0000269" key="7">
    <source>
    </source>
</evidence>
<evidence type="ECO:0000303" key="8">
    <source>
    </source>
</evidence>
<evidence type="ECO:0000305" key="9"/>
<evidence type="ECO:0000305" key="10">
    <source>
    </source>
</evidence>
<evidence type="ECO:0000312" key="11">
    <source>
        <dbReference type="MGI" id="MGI:98796"/>
    </source>
</evidence>
<reference key="1">
    <citation type="journal article" date="1990" name="Genomics">
        <title>Characterization and chromosomal mapping of a cDNA encoding tryptophan hydroxylase from a mouse mastocytoma cell line.</title>
        <authorList>
            <person name="Stoll J."/>
            <person name="Kozak C.A."/>
            <person name="Goldman D."/>
        </authorList>
    </citation>
    <scope>NUCLEOTIDE SEQUENCE [MRNA]</scope>
    <scope>FUNCTION</scope>
    <scope>CATALYTIC ACTIVITY</scope>
</reference>
<reference key="2">
    <citation type="journal article" date="2004" name="Genome Res.">
        <title>The status, quality, and expansion of the NIH full-length cDNA project: the Mammalian Gene Collection (MGC).</title>
        <authorList>
            <consortium name="The MGC Project Team"/>
        </authorList>
    </citation>
    <scope>NUCLEOTIDE SEQUENCE [LARGE SCALE MRNA]</scope>
    <source>
        <strain>C57BL/6J</strain>
        <tissue>Brain</tissue>
    </source>
</reference>
<reference key="3">
    <citation type="journal article" date="2003" name="Cell">
        <title>Serotonylation of small GTPases is a signal transduction pathway that triggers platelet alpha-granule release.</title>
        <authorList>
            <person name="Walther D.J."/>
            <person name="Peter J.U."/>
            <person name="Winter S."/>
            <person name="Hoeltje M."/>
            <person name="Paulmann N."/>
            <person name="Grohmann M."/>
            <person name="Vowinckel J."/>
            <person name="Alamo-Bethencourt V."/>
            <person name="Wilhelm C.S."/>
            <person name="Ahnert-Hilger G."/>
            <person name="Bader M."/>
        </authorList>
    </citation>
    <scope>FUNCTION</scope>
    <scope>DISRUPTION PHENOTYPE</scope>
</reference>
<reference key="4">
    <citation type="journal article" date="2024" name="Commun. Biol.">
        <title>Hyperphenylalaninemia and serotonin deficiency in Dnajc12-deficient mice.</title>
        <authorList>
            <person name="Cao Y."/>
            <person name="Popp O."/>
            <person name="Milani N."/>
            <person name="Qadri F."/>
            <person name="Kuehn R."/>
            <person name="Mertins P."/>
            <person name="Bader M."/>
            <person name="Alenina N."/>
        </authorList>
    </citation>
    <scope>INTERACTION WITH DNAJC12</scope>
</reference>
<accession>P17532</accession>